<protein>
    <recommendedName>
        <fullName evidence="1">Dihydroxy-acid dehydratase</fullName>
        <shortName evidence="1">DAD</shortName>
        <ecNumber evidence="1">4.2.1.9</ecNumber>
    </recommendedName>
</protein>
<accession>Q2KZT7</accession>
<keyword id="KW-0001">2Fe-2S</keyword>
<keyword id="KW-0028">Amino-acid biosynthesis</keyword>
<keyword id="KW-0100">Branched-chain amino acid biosynthesis</keyword>
<keyword id="KW-0408">Iron</keyword>
<keyword id="KW-0411">Iron-sulfur</keyword>
<keyword id="KW-0456">Lyase</keyword>
<keyword id="KW-0460">Magnesium</keyword>
<keyword id="KW-0479">Metal-binding</keyword>
<keyword id="KW-1185">Reference proteome</keyword>
<proteinExistence type="inferred from homology"/>
<comment type="function">
    <text evidence="1">Functions in the biosynthesis of branched-chain amino acids. Catalyzes the dehydration of (2R,3R)-2,3-dihydroxy-3-methylpentanoate (2,3-dihydroxy-3-methylvalerate) into 2-oxo-3-methylpentanoate (2-oxo-3-methylvalerate) and of (2R)-2,3-dihydroxy-3-methylbutanoate (2,3-dihydroxyisovalerate) into 2-oxo-3-methylbutanoate (2-oxoisovalerate), the penultimate precursor to L-isoleucine and L-valine, respectively.</text>
</comment>
<comment type="catalytic activity">
    <reaction evidence="1">
        <text>(2R)-2,3-dihydroxy-3-methylbutanoate = 3-methyl-2-oxobutanoate + H2O</text>
        <dbReference type="Rhea" id="RHEA:24809"/>
        <dbReference type="ChEBI" id="CHEBI:11851"/>
        <dbReference type="ChEBI" id="CHEBI:15377"/>
        <dbReference type="ChEBI" id="CHEBI:49072"/>
        <dbReference type="EC" id="4.2.1.9"/>
    </reaction>
    <physiologicalReaction direction="left-to-right" evidence="1">
        <dbReference type="Rhea" id="RHEA:24810"/>
    </physiologicalReaction>
</comment>
<comment type="catalytic activity">
    <reaction evidence="1">
        <text>(2R,3R)-2,3-dihydroxy-3-methylpentanoate = (S)-3-methyl-2-oxopentanoate + H2O</text>
        <dbReference type="Rhea" id="RHEA:27694"/>
        <dbReference type="ChEBI" id="CHEBI:15377"/>
        <dbReference type="ChEBI" id="CHEBI:35146"/>
        <dbReference type="ChEBI" id="CHEBI:49258"/>
        <dbReference type="EC" id="4.2.1.9"/>
    </reaction>
    <physiologicalReaction direction="left-to-right" evidence="1">
        <dbReference type="Rhea" id="RHEA:27695"/>
    </physiologicalReaction>
</comment>
<comment type="cofactor">
    <cofactor evidence="1">
        <name>[2Fe-2S] cluster</name>
        <dbReference type="ChEBI" id="CHEBI:190135"/>
    </cofactor>
    <text evidence="1">Binds 1 [2Fe-2S] cluster per subunit. This cluster acts as a Lewis acid cofactor.</text>
</comment>
<comment type="cofactor">
    <cofactor evidence="1">
        <name>Mg(2+)</name>
        <dbReference type="ChEBI" id="CHEBI:18420"/>
    </cofactor>
</comment>
<comment type="pathway">
    <text evidence="1">Amino-acid biosynthesis; L-isoleucine biosynthesis; L-isoleucine from 2-oxobutanoate: step 3/4.</text>
</comment>
<comment type="pathway">
    <text evidence="1">Amino-acid biosynthesis; L-valine biosynthesis; L-valine from pyruvate: step 3/4.</text>
</comment>
<comment type="subunit">
    <text evidence="1">Homodimer.</text>
</comment>
<comment type="similarity">
    <text evidence="1">Belongs to the IlvD/Edd family.</text>
</comment>
<gene>
    <name evidence="1" type="primary">ilvD</name>
    <name type="ordered locus">BAV0317</name>
</gene>
<dbReference type="EC" id="4.2.1.9" evidence="1"/>
<dbReference type="EMBL" id="AM167904">
    <property type="protein sequence ID" value="CAJ47922.1"/>
    <property type="molecule type" value="Genomic_DNA"/>
</dbReference>
<dbReference type="RefSeq" id="WP_012416019.1">
    <property type="nucleotide sequence ID" value="NC_010645.1"/>
</dbReference>
<dbReference type="SMR" id="Q2KZT7"/>
<dbReference type="STRING" id="360910.BAV0317"/>
<dbReference type="GeneID" id="92936433"/>
<dbReference type="KEGG" id="bav:BAV0317"/>
<dbReference type="eggNOG" id="COG0129">
    <property type="taxonomic scope" value="Bacteria"/>
</dbReference>
<dbReference type="HOGENOM" id="CLU_014271_4_2_4"/>
<dbReference type="OrthoDB" id="9807077at2"/>
<dbReference type="UniPathway" id="UPA00047">
    <property type="reaction ID" value="UER00057"/>
</dbReference>
<dbReference type="UniPathway" id="UPA00049">
    <property type="reaction ID" value="UER00061"/>
</dbReference>
<dbReference type="Proteomes" id="UP000001977">
    <property type="component" value="Chromosome"/>
</dbReference>
<dbReference type="GO" id="GO:0005829">
    <property type="term" value="C:cytosol"/>
    <property type="evidence" value="ECO:0007669"/>
    <property type="project" value="TreeGrafter"/>
</dbReference>
<dbReference type="GO" id="GO:0051537">
    <property type="term" value="F:2 iron, 2 sulfur cluster binding"/>
    <property type="evidence" value="ECO:0007669"/>
    <property type="project" value="UniProtKB-UniRule"/>
</dbReference>
<dbReference type="GO" id="GO:0004160">
    <property type="term" value="F:dihydroxy-acid dehydratase activity"/>
    <property type="evidence" value="ECO:0007669"/>
    <property type="project" value="UniProtKB-UniRule"/>
</dbReference>
<dbReference type="GO" id="GO:0000287">
    <property type="term" value="F:magnesium ion binding"/>
    <property type="evidence" value="ECO:0007669"/>
    <property type="project" value="UniProtKB-UniRule"/>
</dbReference>
<dbReference type="GO" id="GO:0009097">
    <property type="term" value="P:isoleucine biosynthetic process"/>
    <property type="evidence" value="ECO:0007669"/>
    <property type="project" value="UniProtKB-UniRule"/>
</dbReference>
<dbReference type="GO" id="GO:0009099">
    <property type="term" value="P:L-valine biosynthetic process"/>
    <property type="evidence" value="ECO:0007669"/>
    <property type="project" value="UniProtKB-UniRule"/>
</dbReference>
<dbReference type="FunFam" id="3.50.30.80:FF:000001">
    <property type="entry name" value="Dihydroxy-acid dehydratase"/>
    <property type="match status" value="1"/>
</dbReference>
<dbReference type="Gene3D" id="3.50.30.80">
    <property type="entry name" value="IlvD/EDD C-terminal domain-like"/>
    <property type="match status" value="1"/>
</dbReference>
<dbReference type="HAMAP" id="MF_00012">
    <property type="entry name" value="IlvD"/>
    <property type="match status" value="1"/>
</dbReference>
<dbReference type="InterPro" id="IPR042096">
    <property type="entry name" value="Dihydro-acid_dehy_C"/>
</dbReference>
<dbReference type="InterPro" id="IPR004404">
    <property type="entry name" value="DihydroxyA_deHydtase"/>
</dbReference>
<dbReference type="InterPro" id="IPR020558">
    <property type="entry name" value="DiOHA_6PGluconate_deHydtase_CS"/>
</dbReference>
<dbReference type="InterPro" id="IPR056740">
    <property type="entry name" value="ILV_EDD_C"/>
</dbReference>
<dbReference type="InterPro" id="IPR000581">
    <property type="entry name" value="ILV_EDD_N"/>
</dbReference>
<dbReference type="InterPro" id="IPR037237">
    <property type="entry name" value="IlvD/EDD_N"/>
</dbReference>
<dbReference type="NCBIfam" id="TIGR00110">
    <property type="entry name" value="ilvD"/>
    <property type="match status" value="1"/>
</dbReference>
<dbReference type="NCBIfam" id="NF009103">
    <property type="entry name" value="PRK12448.1"/>
    <property type="match status" value="1"/>
</dbReference>
<dbReference type="PANTHER" id="PTHR43661">
    <property type="entry name" value="D-XYLONATE DEHYDRATASE"/>
    <property type="match status" value="1"/>
</dbReference>
<dbReference type="PANTHER" id="PTHR43661:SF3">
    <property type="entry name" value="D-XYLONATE DEHYDRATASE YAGF-RELATED"/>
    <property type="match status" value="1"/>
</dbReference>
<dbReference type="Pfam" id="PF24877">
    <property type="entry name" value="ILV_EDD_C"/>
    <property type="match status" value="1"/>
</dbReference>
<dbReference type="Pfam" id="PF00920">
    <property type="entry name" value="ILVD_EDD_N"/>
    <property type="match status" value="1"/>
</dbReference>
<dbReference type="SUPFAM" id="SSF143975">
    <property type="entry name" value="IlvD/EDD N-terminal domain-like"/>
    <property type="match status" value="1"/>
</dbReference>
<dbReference type="SUPFAM" id="SSF52016">
    <property type="entry name" value="LeuD/IlvD-like"/>
    <property type="match status" value="1"/>
</dbReference>
<dbReference type="PROSITE" id="PS00886">
    <property type="entry name" value="ILVD_EDD_1"/>
    <property type="match status" value="1"/>
</dbReference>
<dbReference type="PROSITE" id="PS00887">
    <property type="entry name" value="ILVD_EDD_2"/>
    <property type="match status" value="1"/>
</dbReference>
<sequence length="618" mass="65247">MPHYRSRTSTHGRNMAGARALWRATGMKDGDFGKPIIAVVNSFTQFVPGHVHLKDLGALVASQIEAAGGVAKEFNTIAVDDGIAMGHGGMLYSLPSRELIADSVEYMVNAHCADAMVCISNCDKITPGMLMAAMRLNIPVVFVSGGPMEAGKVVSPTDGKVIKLDLVDAMIKAADPNVSDAEAEQVERSACPTCGSCSGMFTANSMNCLTEAIGLALPGNGTIVATHAWRRGLFEQAGRLVVDLCRRYYEQDDASVLPRSIATKAAFENAMSLDVAMGGSTNTVLHLLAAAQEAGVDFTMADIDRISRKVPCLCKAAPATDKYHIEDVHRAGGILGILGELGRANLLDLSCGNVHSGTLGQAIAQWDVAGGAGEAAQTFYRAAPGGVPTTVAFSQDKTFLTLDLDRKAGCIRSKEHAYSQDGGLAVLYGNLAEKGCIVKTAGVDESQWVFTGRARVFESQEDAVEGILGDKVEAGDVVIIRYEGPKGGPGMQEMLYPTSYLKSKGLGKTCALFTDGRFSGGSSGLVIGHASPEAAEGGAIGLVEDGDVIEIDIPKRRMHLAVDDAELARRRAAMDARGDKAWQPLDRERVVSLALQAYAALATSADRGAVRDLSQIKR</sequence>
<feature type="chain" id="PRO_1000000958" description="Dihydroxy-acid dehydratase">
    <location>
        <begin position="1"/>
        <end position="618"/>
    </location>
</feature>
<feature type="active site" description="Proton acceptor" evidence="1">
    <location>
        <position position="519"/>
    </location>
</feature>
<feature type="binding site" evidence="1">
    <location>
        <position position="81"/>
    </location>
    <ligand>
        <name>Mg(2+)</name>
        <dbReference type="ChEBI" id="CHEBI:18420"/>
    </ligand>
</feature>
<feature type="binding site" evidence="1">
    <location>
        <position position="122"/>
    </location>
    <ligand>
        <name>[2Fe-2S] cluster</name>
        <dbReference type="ChEBI" id="CHEBI:190135"/>
    </ligand>
</feature>
<feature type="binding site" evidence="1">
    <location>
        <position position="123"/>
    </location>
    <ligand>
        <name>Mg(2+)</name>
        <dbReference type="ChEBI" id="CHEBI:18420"/>
    </ligand>
</feature>
<feature type="binding site" description="via carbamate group" evidence="1">
    <location>
        <position position="124"/>
    </location>
    <ligand>
        <name>Mg(2+)</name>
        <dbReference type="ChEBI" id="CHEBI:18420"/>
    </ligand>
</feature>
<feature type="binding site" evidence="1">
    <location>
        <position position="197"/>
    </location>
    <ligand>
        <name>[2Fe-2S] cluster</name>
        <dbReference type="ChEBI" id="CHEBI:190135"/>
    </ligand>
</feature>
<feature type="binding site" evidence="1">
    <location>
        <position position="493"/>
    </location>
    <ligand>
        <name>Mg(2+)</name>
        <dbReference type="ChEBI" id="CHEBI:18420"/>
    </ligand>
</feature>
<feature type="modified residue" description="N6-carboxylysine" evidence="1">
    <location>
        <position position="124"/>
    </location>
</feature>
<reference key="1">
    <citation type="journal article" date="2006" name="J. Bacteriol.">
        <title>Comparison of the genome sequence of the poultry pathogen Bordetella avium with those of B. bronchiseptica, B. pertussis, and B. parapertussis reveals extensive diversity in surface structures associated with host interaction.</title>
        <authorList>
            <person name="Sebaihia M."/>
            <person name="Preston A."/>
            <person name="Maskell D.J."/>
            <person name="Kuzmiak H."/>
            <person name="Connell T.D."/>
            <person name="King N.D."/>
            <person name="Orndorff P.E."/>
            <person name="Miyamoto D.M."/>
            <person name="Thomson N.R."/>
            <person name="Harris D."/>
            <person name="Goble A."/>
            <person name="Lord A."/>
            <person name="Murphy L."/>
            <person name="Quail M.A."/>
            <person name="Rutter S."/>
            <person name="Squares R."/>
            <person name="Squares S."/>
            <person name="Woodward J."/>
            <person name="Parkhill J."/>
            <person name="Temple L.M."/>
        </authorList>
    </citation>
    <scope>NUCLEOTIDE SEQUENCE [LARGE SCALE GENOMIC DNA]</scope>
    <source>
        <strain>197N</strain>
    </source>
</reference>
<organism>
    <name type="scientific">Bordetella avium (strain 197N)</name>
    <dbReference type="NCBI Taxonomy" id="360910"/>
    <lineage>
        <taxon>Bacteria</taxon>
        <taxon>Pseudomonadati</taxon>
        <taxon>Pseudomonadota</taxon>
        <taxon>Betaproteobacteria</taxon>
        <taxon>Burkholderiales</taxon>
        <taxon>Alcaligenaceae</taxon>
        <taxon>Bordetella</taxon>
    </lineage>
</organism>
<name>ILVD_BORA1</name>
<evidence type="ECO:0000255" key="1">
    <source>
        <dbReference type="HAMAP-Rule" id="MF_00012"/>
    </source>
</evidence>